<reference key="1">
    <citation type="journal article" date="2022" name="J. Infect. Dis.">
        <title>Exportation of Monkeypox virus from the African continent.</title>
        <authorList>
            <person name="Mauldin M.R."/>
            <person name="McCollum A.M."/>
            <person name="Nakazawa Y.J."/>
            <person name="Mandra A."/>
            <person name="Whitehouse E.R."/>
            <person name="Davidson W."/>
            <person name="Zhao H."/>
            <person name="Gao J."/>
            <person name="Li Y."/>
            <person name="Doty J."/>
            <person name="Yinka-Ogunleye A."/>
            <person name="Akinpelu A."/>
            <person name="Aruna O."/>
            <person name="Naidoo D."/>
            <person name="Lewandowski K."/>
            <person name="Afrough B."/>
            <person name="Graham V."/>
            <person name="Aarons E."/>
            <person name="Hewson R."/>
            <person name="Vipond R."/>
            <person name="Dunning J."/>
            <person name="Chand M."/>
            <person name="Brown C."/>
            <person name="Cohen-Gihon I."/>
            <person name="Erez N."/>
            <person name="Shifman O."/>
            <person name="Israeli O."/>
            <person name="Sharon M."/>
            <person name="Schwartz E."/>
            <person name="Beth-Din A."/>
            <person name="Zvi A."/>
            <person name="Mak T.M."/>
            <person name="Ng Y.K."/>
            <person name="Cui L."/>
            <person name="Lin R.T.P."/>
            <person name="Olson V.A."/>
            <person name="Brooks T."/>
            <person name="Paran N."/>
            <person name="Ihekweazu C."/>
            <person name="Reynolds M.G."/>
        </authorList>
    </citation>
    <scope>NUCLEOTIDE SEQUENCE [LARGE SCALE GENOMIC DNA]</scope>
    <source>
        <strain>MPXV-M5312_HM12_Rivers</strain>
    </source>
</reference>
<name>PG031_MONPV</name>
<gene>
    <name type="primary">OPG031</name>
    <name evidence="3" type="ORF">MPXV-M5312_HM12_Rivers-016</name>
    <name type="ORF">MPXVgp016</name>
</gene>
<accession>A0A7H0DN05</accession>
<comment type="function">
    <text evidence="1">Plays a role in the inhibition of host NF-kappa-B activation. Mechanistically, blocks the subunit p65/RELA translocation into the host nucleus.</text>
</comment>
<comment type="subcellular location">
    <subcellularLocation>
        <location evidence="1">Host cytoplasm</location>
    </subcellularLocation>
    <subcellularLocation>
        <location evidence="1">Host nucleus</location>
    </subcellularLocation>
</comment>
<comment type="induction">
    <text evidence="1">Expressed in the early phase of the viral replicative cycle.</text>
</comment>
<comment type="similarity">
    <text evidence="2">Belongs to the poxviridae OPG031 family.</text>
</comment>
<organism evidence="3 4">
    <name type="scientific">Monkeypox virus</name>
    <dbReference type="NCBI Taxonomy" id="10244"/>
    <lineage>
        <taxon>Viruses</taxon>
        <taxon>Varidnaviria</taxon>
        <taxon>Bamfordvirae</taxon>
        <taxon>Nucleocytoviricota</taxon>
        <taxon>Pokkesviricetes</taxon>
        <taxon>Chitovirales</taxon>
        <taxon>Poxviridae</taxon>
        <taxon>Chordopoxvirinae</taxon>
        <taxon>Orthopoxvirus</taxon>
    </lineage>
</organism>
<keyword id="KW-0244">Early protein</keyword>
<keyword id="KW-1035">Host cytoplasm</keyword>
<keyword id="KW-1048">Host nucleus</keyword>
<keyword id="KW-1185">Reference proteome</keyword>
<proteinExistence type="inferred from homology"/>
<organismHost>
    <name type="scientific">Cynomys gunnisoni</name>
    <name type="common">Gunnison's prairie dog</name>
    <name type="synonym">Spermophilus gunnisoni</name>
    <dbReference type="NCBI Taxonomy" id="45479"/>
</organismHost>
<organismHost>
    <name type="scientific">Cynomys leucurus</name>
    <name type="common">White-tailed prairie dog</name>
    <dbReference type="NCBI Taxonomy" id="99825"/>
</organismHost>
<organismHost>
    <name type="scientific">Cynomys ludovicianus</name>
    <name type="common">Black-tailed prairie dog</name>
    <dbReference type="NCBI Taxonomy" id="45480"/>
</organismHost>
<organismHost>
    <name type="scientific">Cynomys mexicanus</name>
    <name type="common">Mexican prairie dog</name>
    <dbReference type="NCBI Taxonomy" id="99826"/>
</organismHost>
<organismHost>
    <name type="scientific">Cynomys parvidens</name>
    <name type="common">Utah prairie dog</name>
    <dbReference type="NCBI Taxonomy" id="99827"/>
</organismHost>
<organismHost>
    <name type="scientific">Gliridae</name>
    <name type="common">dormice</name>
    <dbReference type="NCBI Taxonomy" id="30650"/>
</organismHost>
<organismHost>
    <name type="scientific">Heliosciurus ruwenzorii</name>
    <name type="common">Ruwenzori sun squirrel</name>
    <dbReference type="NCBI Taxonomy" id="226685"/>
</organismHost>
<organismHost>
    <name type="scientific">Homo sapiens</name>
    <name type="common">Human</name>
    <dbReference type="NCBI Taxonomy" id="9606"/>
</organismHost>
<organismHost>
    <name type="scientific">Mus musculus</name>
    <name type="common">Mouse</name>
    <dbReference type="NCBI Taxonomy" id="10090"/>
</organismHost>
<dbReference type="EMBL" id="MT903340">
    <property type="protein sequence ID" value="QNP12888.1"/>
    <property type="molecule type" value="Genomic_DNA"/>
</dbReference>
<dbReference type="RefSeq" id="YP_010377015.1">
    <property type="nucleotide sequence ID" value="NC_063383.1"/>
</dbReference>
<dbReference type="SMR" id="A0A7H0DN05"/>
<dbReference type="GeneID" id="72551430"/>
<dbReference type="Proteomes" id="UP000516359">
    <property type="component" value="Genome"/>
</dbReference>
<dbReference type="GO" id="GO:0030430">
    <property type="term" value="C:host cell cytoplasm"/>
    <property type="evidence" value="ECO:0007669"/>
    <property type="project" value="UniProtKB-SubCell"/>
</dbReference>
<dbReference type="GO" id="GO:0042025">
    <property type="term" value="C:host cell nucleus"/>
    <property type="evidence" value="ECO:0007669"/>
    <property type="project" value="UniProtKB-SubCell"/>
</dbReference>
<dbReference type="InterPro" id="IPR005004">
    <property type="entry name" value="Poxvirus_C4/C10"/>
</dbReference>
<dbReference type="Pfam" id="PF03336">
    <property type="entry name" value="Pox_C4_C10"/>
    <property type="match status" value="1"/>
</dbReference>
<dbReference type="PIRSF" id="PIRSF003698">
    <property type="entry name" value="VAC_C10L"/>
    <property type="match status" value="1"/>
</dbReference>
<evidence type="ECO:0000250" key="1">
    <source>
        <dbReference type="UniProtKB" id="P17370"/>
    </source>
</evidence>
<evidence type="ECO:0000305" key="2"/>
<evidence type="ECO:0000312" key="3">
    <source>
        <dbReference type="EMBL" id="QNP12888.1"/>
    </source>
</evidence>
<evidence type="ECO:0000312" key="4">
    <source>
        <dbReference type="Proteomes" id="UP000516359"/>
    </source>
</evidence>
<sequence>MDTIKIFNHGEFDTIRNELVNLLKVVKWNTINSNVTVSSTDTIDISDCIREILYKQFKNVRNIEVSSDISFIKYNRFNDTTITDDNMGYYLVIYLNRTKSLKTLIYPTLETVISSSDDIMFSKSLNFRFENTKREYKLVMCSISLIYKPSICRIQYDNNKYIDISDSQEGNNLCYCVITMDPHHLIDLETMCVLVDKSGKCLLVNEFYIRFRKNHIYNSFVDICMDHIFELPNTKELFTLCNDDGRNIAWDNDKLESGNNTWIPKTDDEYMFLSKLMNIAKFNNTKFDYYVLVGDTDPCTVFTFKVTKYYININYE</sequence>
<protein>
    <recommendedName>
        <fullName>protein OPG031</fullName>
    </recommendedName>
</protein>
<feature type="chain" id="PRO_0000457196" description="protein OPG031">
    <location>
        <begin position="1"/>
        <end position="316"/>
    </location>
</feature>